<protein>
    <recommendedName>
        <fullName evidence="4">Eumenitin-F</fullName>
    </recommendedName>
</protein>
<name>EUMEF_EUMFR</name>
<keyword id="KW-0044">Antibiotic</keyword>
<keyword id="KW-0929">Antimicrobial</keyword>
<keyword id="KW-0204">Cytolysis</keyword>
<keyword id="KW-0903">Direct protein sequencing</keyword>
<keyword id="KW-0295">Fungicide</keyword>
<keyword id="KW-1213">G-protein coupled receptor impairing toxin</keyword>
<keyword id="KW-0391">Immunity</keyword>
<keyword id="KW-0399">Innate immunity</keyword>
<keyword id="KW-0467">Mast cell degranulation</keyword>
<keyword id="KW-0472">Membrane</keyword>
<keyword id="KW-0964">Secreted</keyword>
<keyword id="KW-1052">Target cell membrane</keyword>
<keyword id="KW-1053">Target membrane</keyword>
<keyword id="KW-0800">Toxin</keyword>
<keyword id="KW-0812">Transmembrane</keyword>
<proteinExistence type="evidence at protein level"/>
<sequence>LNLKGLFKKVASLLT</sequence>
<reference key="1">
    <citation type="journal article" date="2011" name="Toxicon">
        <title>Chemical and biological characterization of four new linear cationic alpha-helical peptides from the venoms of two solitary eumenine wasps.</title>
        <authorList>
            <person name="Rangel M."/>
            <person name="Dos Santos Cabrera M.P."/>
            <person name="Kazuma K."/>
            <person name="Ando K."/>
            <person name="Wang X."/>
            <person name="Kato M."/>
            <person name="Nihei K.I."/>
            <person name="Hirata I.Y."/>
            <person name="Cross T.J."/>
            <person name="Garcia A.N."/>
            <person name="Faquim-Mauro E.L."/>
            <person name="Franzolin M.R."/>
            <person name="Fuchino H."/>
            <person name="Mori-Yasumoto K."/>
            <person name="Sekita S."/>
            <person name="Kadowaki M."/>
            <person name="Satake M."/>
            <person name="Konno K."/>
        </authorList>
    </citation>
    <scope>PROTEIN SEQUENCE</scope>
    <scope>SYNTHESIS</scope>
    <scope>FUNCTION</scope>
    <scope>SUBCELLULAR LOCATION</scope>
    <scope>TISSUE SPECIFICITY</scope>
    <scope>IDENTIFICATION BY MASS SPECTROMETRY</scope>
    <scope>CIRCULAR DICHROISM</scope>
    <source>
        <tissue>Venom</tissue>
    </source>
</reference>
<reference key="2">
    <citation type="journal article" date="2016" name="Toxins">
        <title>Peptide toxins in solitary wasp venoms.</title>
        <authorList>
            <person name="Konno K."/>
            <person name="Kazuma K."/>
            <person name="Nihei K."/>
        </authorList>
    </citation>
    <scope>REVIEW</scope>
</reference>
<dbReference type="GO" id="GO:0005576">
    <property type="term" value="C:extracellular region"/>
    <property type="evidence" value="ECO:0007669"/>
    <property type="project" value="UniProtKB-SubCell"/>
</dbReference>
<dbReference type="GO" id="GO:0016020">
    <property type="term" value="C:membrane"/>
    <property type="evidence" value="ECO:0007669"/>
    <property type="project" value="UniProtKB-KW"/>
</dbReference>
<dbReference type="GO" id="GO:0044218">
    <property type="term" value="C:other organism cell membrane"/>
    <property type="evidence" value="ECO:0007669"/>
    <property type="project" value="UniProtKB-KW"/>
</dbReference>
<dbReference type="GO" id="GO:0090729">
    <property type="term" value="F:toxin activity"/>
    <property type="evidence" value="ECO:0007669"/>
    <property type="project" value="UniProtKB-KW"/>
</dbReference>
<dbReference type="GO" id="GO:0042742">
    <property type="term" value="P:defense response to bacterium"/>
    <property type="evidence" value="ECO:0007669"/>
    <property type="project" value="UniProtKB-KW"/>
</dbReference>
<dbReference type="GO" id="GO:0050832">
    <property type="term" value="P:defense response to fungus"/>
    <property type="evidence" value="ECO:0007669"/>
    <property type="project" value="UniProtKB-KW"/>
</dbReference>
<dbReference type="GO" id="GO:0045087">
    <property type="term" value="P:innate immune response"/>
    <property type="evidence" value="ECO:0007669"/>
    <property type="project" value="UniProtKB-KW"/>
</dbReference>
<dbReference type="GO" id="GO:0031640">
    <property type="term" value="P:killing of cells of another organism"/>
    <property type="evidence" value="ECO:0007669"/>
    <property type="project" value="UniProtKB-KW"/>
</dbReference>
<organism>
    <name type="scientific">Eumenes fraterculus</name>
    <name type="common">Solitary wasp</name>
    <dbReference type="NCBI Taxonomy" id="1035771"/>
    <lineage>
        <taxon>Eukaryota</taxon>
        <taxon>Metazoa</taxon>
        <taxon>Ecdysozoa</taxon>
        <taxon>Arthropoda</taxon>
        <taxon>Hexapoda</taxon>
        <taxon>Insecta</taxon>
        <taxon>Pterygota</taxon>
        <taxon>Neoptera</taxon>
        <taxon>Endopterygota</taxon>
        <taxon>Hymenoptera</taxon>
        <taxon>Apocrita</taxon>
        <taxon>Aculeata</taxon>
        <taxon>Vespoidea</taxon>
        <taxon>Vespidae</taxon>
        <taxon>Eumeninae</taxon>
        <taxon>Eumenes</taxon>
    </lineage>
</organism>
<feature type="peptide" id="PRO_0000411088" description="Eumenitin-F" evidence="3">
    <location>
        <begin position="1"/>
        <end position="15"/>
    </location>
</feature>
<comment type="function">
    <text evidence="1 2 3">Linear cationic alpha-helical peptide with antimicrobial activities against both Gram-positive and Gram-negative strains and against the yeast C.albicans. Shows moderate mast cell degranulation and leishmanicidal activities. Has a very low hemolytic activity. Induces an ion channel-like incorporation in artificial lipid bilayers, forming pores with relativeley high conductances (PubMed:21549739). Its mast cell degranulation activity may be related to the activation of G-protein coupled receptors in mast cells as well as interaction with other proteins located in cell endosomal membranes in the mast cells (By similarity).</text>
</comment>
<comment type="subcellular location">
    <subcellularLocation>
        <location evidence="3">Secreted</location>
    </subcellularLocation>
    <subcellularLocation>
        <location evidence="3">Target cell membrane</location>
    </subcellularLocation>
    <text evidence="6">Assumes an amphipathic alpha-helical conformation in a lipid environment (Probable). Forms pores in membranes (Probable).</text>
</comment>
<comment type="tissue specificity">
    <text evidence="3">Expressed by the venom gland.</text>
</comment>
<comment type="similarity">
    <text evidence="5">Belongs to the MCD family. Eumenitin subfamily.</text>
</comment>
<evidence type="ECO:0000250" key="1">
    <source>
        <dbReference type="UniProtKB" id="P01514"/>
    </source>
</evidence>
<evidence type="ECO:0000250" key="2">
    <source>
        <dbReference type="UniProtKB" id="P84914"/>
    </source>
</evidence>
<evidence type="ECO:0000269" key="3">
    <source>
    </source>
</evidence>
<evidence type="ECO:0000303" key="4">
    <source>
    </source>
</evidence>
<evidence type="ECO:0000305" key="5"/>
<evidence type="ECO:0000305" key="6">
    <source>
    </source>
</evidence>
<accession>P0CJ37</accession>